<name>RL17_TRIL1</name>
<reference key="1">
    <citation type="submission" date="2008-05" db="EMBL/GenBank/DDBJ databases">
        <title>Complete sequence of chromosome of Geobacter lovleyi SZ.</title>
        <authorList>
            <consortium name="US DOE Joint Genome Institute"/>
            <person name="Lucas S."/>
            <person name="Copeland A."/>
            <person name="Lapidus A."/>
            <person name="Glavina del Rio T."/>
            <person name="Dalin E."/>
            <person name="Tice H."/>
            <person name="Bruce D."/>
            <person name="Goodwin L."/>
            <person name="Pitluck S."/>
            <person name="Chertkov O."/>
            <person name="Meincke L."/>
            <person name="Brettin T."/>
            <person name="Detter J.C."/>
            <person name="Han C."/>
            <person name="Tapia R."/>
            <person name="Kuske C.R."/>
            <person name="Schmutz J."/>
            <person name="Larimer F."/>
            <person name="Land M."/>
            <person name="Hauser L."/>
            <person name="Kyrpides N."/>
            <person name="Mikhailova N."/>
            <person name="Sung Y."/>
            <person name="Fletcher K.E."/>
            <person name="Ritalahti K.M."/>
            <person name="Loeffler F.E."/>
            <person name="Richardson P."/>
        </authorList>
    </citation>
    <scope>NUCLEOTIDE SEQUENCE [LARGE SCALE GENOMIC DNA]</scope>
    <source>
        <strain>ATCC BAA-1151 / DSM 17278 / SZ</strain>
    </source>
</reference>
<proteinExistence type="inferred from homology"/>
<feature type="chain" id="PRO_1000144431" description="Large ribosomal subunit protein bL17">
    <location>
        <begin position="1"/>
        <end position="124"/>
    </location>
</feature>
<protein>
    <recommendedName>
        <fullName evidence="1">Large ribosomal subunit protein bL17</fullName>
    </recommendedName>
    <alternativeName>
        <fullName evidence="2">50S ribosomal protein L17</fullName>
    </alternativeName>
</protein>
<dbReference type="EMBL" id="CP001089">
    <property type="protein sequence ID" value="ACD95095.1"/>
    <property type="molecule type" value="Genomic_DNA"/>
</dbReference>
<dbReference type="SMR" id="B3E858"/>
<dbReference type="STRING" id="398767.Glov_1374"/>
<dbReference type="KEGG" id="glo:Glov_1374"/>
<dbReference type="eggNOG" id="COG0203">
    <property type="taxonomic scope" value="Bacteria"/>
</dbReference>
<dbReference type="HOGENOM" id="CLU_074407_2_2_7"/>
<dbReference type="OrthoDB" id="9809073at2"/>
<dbReference type="Proteomes" id="UP000002420">
    <property type="component" value="Chromosome"/>
</dbReference>
<dbReference type="GO" id="GO:0022625">
    <property type="term" value="C:cytosolic large ribosomal subunit"/>
    <property type="evidence" value="ECO:0007669"/>
    <property type="project" value="TreeGrafter"/>
</dbReference>
<dbReference type="GO" id="GO:0003735">
    <property type="term" value="F:structural constituent of ribosome"/>
    <property type="evidence" value="ECO:0007669"/>
    <property type="project" value="InterPro"/>
</dbReference>
<dbReference type="GO" id="GO:0006412">
    <property type="term" value="P:translation"/>
    <property type="evidence" value="ECO:0007669"/>
    <property type="project" value="UniProtKB-UniRule"/>
</dbReference>
<dbReference type="FunFam" id="3.90.1030.10:FF:000001">
    <property type="entry name" value="50S ribosomal protein L17"/>
    <property type="match status" value="1"/>
</dbReference>
<dbReference type="Gene3D" id="3.90.1030.10">
    <property type="entry name" value="Ribosomal protein L17"/>
    <property type="match status" value="1"/>
</dbReference>
<dbReference type="HAMAP" id="MF_01368">
    <property type="entry name" value="Ribosomal_bL17"/>
    <property type="match status" value="1"/>
</dbReference>
<dbReference type="InterPro" id="IPR000456">
    <property type="entry name" value="Ribosomal_bL17"/>
</dbReference>
<dbReference type="InterPro" id="IPR047859">
    <property type="entry name" value="Ribosomal_bL17_CS"/>
</dbReference>
<dbReference type="InterPro" id="IPR036373">
    <property type="entry name" value="Ribosomal_bL17_sf"/>
</dbReference>
<dbReference type="NCBIfam" id="TIGR00059">
    <property type="entry name" value="L17"/>
    <property type="match status" value="1"/>
</dbReference>
<dbReference type="PANTHER" id="PTHR14413:SF16">
    <property type="entry name" value="LARGE RIBOSOMAL SUBUNIT PROTEIN BL17M"/>
    <property type="match status" value="1"/>
</dbReference>
<dbReference type="PANTHER" id="PTHR14413">
    <property type="entry name" value="RIBOSOMAL PROTEIN L17"/>
    <property type="match status" value="1"/>
</dbReference>
<dbReference type="Pfam" id="PF01196">
    <property type="entry name" value="Ribosomal_L17"/>
    <property type="match status" value="1"/>
</dbReference>
<dbReference type="SUPFAM" id="SSF64263">
    <property type="entry name" value="Prokaryotic ribosomal protein L17"/>
    <property type="match status" value="1"/>
</dbReference>
<dbReference type="PROSITE" id="PS01167">
    <property type="entry name" value="RIBOSOMAL_L17"/>
    <property type="match status" value="1"/>
</dbReference>
<accession>B3E858</accession>
<gene>
    <name evidence="1" type="primary">rplQ</name>
    <name type="ordered locus">Glov_1374</name>
</gene>
<evidence type="ECO:0000255" key="1">
    <source>
        <dbReference type="HAMAP-Rule" id="MF_01368"/>
    </source>
</evidence>
<evidence type="ECO:0000305" key="2"/>
<organism>
    <name type="scientific">Trichlorobacter lovleyi (strain ATCC BAA-1151 / DSM 17278 / SZ)</name>
    <name type="common">Geobacter lovleyi</name>
    <dbReference type="NCBI Taxonomy" id="398767"/>
    <lineage>
        <taxon>Bacteria</taxon>
        <taxon>Pseudomonadati</taxon>
        <taxon>Thermodesulfobacteriota</taxon>
        <taxon>Desulfuromonadia</taxon>
        <taxon>Geobacterales</taxon>
        <taxon>Geobacteraceae</taxon>
        <taxon>Trichlorobacter</taxon>
    </lineage>
</organism>
<comment type="subunit">
    <text evidence="1">Part of the 50S ribosomal subunit. Contacts protein L32.</text>
</comment>
<comment type="similarity">
    <text evidence="1">Belongs to the bacterial ribosomal protein bL17 family.</text>
</comment>
<sequence>MRHNNSGRRLGRTTSHRIAMFRNMVTSLLNHERIVTTDAKAKEIRSVAEKMITLGKRGDLHAHRQAAAYIREKSVVTKLFSTIAPRYKDRAGGYTRIIKLGQRLGDAASLSVIELVEEAAPQQS</sequence>
<keyword id="KW-1185">Reference proteome</keyword>
<keyword id="KW-0687">Ribonucleoprotein</keyword>
<keyword id="KW-0689">Ribosomal protein</keyword>